<evidence type="ECO:0000255" key="1">
    <source>
        <dbReference type="HAMAP-Rule" id="MF_00692"/>
    </source>
</evidence>
<sequence length="522" mass="57543">MSFSRSAADAADTLPDLAATLGAPAERAFVTLGDAFHTRLPAAPLAAPYVVGFSDDVAQLLDLPPAIAAQPGFAELFAGNPTRDWPAHAMPYASVYSGHQFGVWAGQLGDGRALTIGELPGTDGRRYELQLKGGGRTPYSRMGDGRAVLRSSIREFLCSEAMHHLGIPTTRALTVIGSDQPVVREEIETAAVVTRVSESFVRFGHFEHFFSNDRPDLLRQLADHVIDRFYPACRDADDPYLALLEAATLRTADLVAQWQAVGFCHGVMNTDNMSILGVTIDYGPFGFVDAFDANHICNHSDTSGRYAYRMQPRIAHWNCYCLAQALLPLIGLQHGIADDDARAERAVDDAQAVLAKFPERFGPALERAMRAKLGLALEREGDAELANKLLETMHASHADFTLTFRRLAQISKHDASRDAPVRDLFIDREAFDAWANLYRARLSEETRDDAARAVAMNRANPKYVLRNHLAEVAIRRAKEKDFSEVERLAQILRRPFDEQPEHEAYAALPPDWAGSLEVSCSS</sequence>
<proteinExistence type="inferred from homology"/>
<accession>B1JTT5</accession>
<protein>
    <recommendedName>
        <fullName evidence="1">Protein nucleotidyltransferase YdiU</fullName>
        <ecNumber evidence="1">2.7.7.-</ecNumber>
    </recommendedName>
    <alternativeName>
        <fullName evidence="1">Protein adenylyltransferase YdiU</fullName>
        <ecNumber evidence="1">2.7.7.108</ecNumber>
    </alternativeName>
    <alternativeName>
        <fullName evidence="1">Protein uridylyltransferase YdiU</fullName>
        <ecNumber evidence="1">2.7.7.-</ecNumber>
    </alternativeName>
</protein>
<name>SELO_BURO0</name>
<dbReference type="EC" id="2.7.7.-" evidence="1"/>
<dbReference type="EC" id="2.7.7.108" evidence="1"/>
<dbReference type="EMBL" id="CP000958">
    <property type="protein sequence ID" value="ACA91092.1"/>
    <property type="molecule type" value="Genomic_DNA"/>
</dbReference>
<dbReference type="RefSeq" id="WP_012328690.1">
    <property type="nucleotide sequence ID" value="NC_010508.1"/>
</dbReference>
<dbReference type="SMR" id="B1JTT5"/>
<dbReference type="GeneID" id="83048704"/>
<dbReference type="KEGG" id="bcm:Bcenmc03_1931"/>
<dbReference type="HOGENOM" id="CLU_010245_4_0_4"/>
<dbReference type="Proteomes" id="UP000002169">
    <property type="component" value="Chromosome 1"/>
</dbReference>
<dbReference type="GO" id="GO:0070733">
    <property type="term" value="F:AMPylase activity"/>
    <property type="evidence" value="ECO:0007669"/>
    <property type="project" value="TreeGrafter"/>
</dbReference>
<dbReference type="GO" id="GO:0005524">
    <property type="term" value="F:ATP binding"/>
    <property type="evidence" value="ECO:0007669"/>
    <property type="project" value="UniProtKB-UniRule"/>
</dbReference>
<dbReference type="GO" id="GO:0000287">
    <property type="term" value="F:magnesium ion binding"/>
    <property type="evidence" value="ECO:0007669"/>
    <property type="project" value="UniProtKB-UniRule"/>
</dbReference>
<dbReference type="HAMAP" id="MF_00692">
    <property type="entry name" value="YdiU_SelO"/>
    <property type="match status" value="1"/>
</dbReference>
<dbReference type="InterPro" id="IPR003846">
    <property type="entry name" value="SelO"/>
</dbReference>
<dbReference type="NCBIfam" id="NF000658">
    <property type="entry name" value="PRK00029.1"/>
    <property type="match status" value="1"/>
</dbReference>
<dbReference type="PANTHER" id="PTHR32057">
    <property type="entry name" value="PROTEIN ADENYLYLTRANSFERASE SELO, MITOCHONDRIAL"/>
    <property type="match status" value="1"/>
</dbReference>
<dbReference type="PANTHER" id="PTHR32057:SF14">
    <property type="entry name" value="PROTEIN ADENYLYLTRANSFERASE SELO, MITOCHONDRIAL"/>
    <property type="match status" value="1"/>
</dbReference>
<dbReference type="Pfam" id="PF02696">
    <property type="entry name" value="SelO"/>
    <property type="match status" value="1"/>
</dbReference>
<gene>
    <name evidence="1" type="primary">ydiU</name>
    <name evidence="1" type="synonym">selO</name>
    <name type="ordered locus">Bcenmc03_1931</name>
</gene>
<keyword id="KW-0067">ATP-binding</keyword>
<keyword id="KW-0460">Magnesium</keyword>
<keyword id="KW-0464">Manganese</keyword>
<keyword id="KW-0479">Metal-binding</keyword>
<keyword id="KW-0547">Nucleotide-binding</keyword>
<keyword id="KW-0548">Nucleotidyltransferase</keyword>
<keyword id="KW-0808">Transferase</keyword>
<comment type="function">
    <text evidence="1">Nucleotidyltransferase involved in the post-translational modification of proteins. It can catalyze the addition of adenosine monophosphate (AMP) or uridine monophosphate (UMP) to a protein, resulting in modifications known as AMPylation and UMPylation.</text>
</comment>
<comment type="catalytic activity">
    <reaction evidence="1">
        <text>L-seryl-[protein] + ATP = 3-O-(5'-adenylyl)-L-seryl-[protein] + diphosphate</text>
        <dbReference type="Rhea" id="RHEA:58120"/>
        <dbReference type="Rhea" id="RHEA-COMP:9863"/>
        <dbReference type="Rhea" id="RHEA-COMP:15073"/>
        <dbReference type="ChEBI" id="CHEBI:29999"/>
        <dbReference type="ChEBI" id="CHEBI:30616"/>
        <dbReference type="ChEBI" id="CHEBI:33019"/>
        <dbReference type="ChEBI" id="CHEBI:142516"/>
        <dbReference type="EC" id="2.7.7.108"/>
    </reaction>
</comment>
<comment type="catalytic activity">
    <reaction evidence="1">
        <text>L-threonyl-[protein] + ATP = 3-O-(5'-adenylyl)-L-threonyl-[protein] + diphosphate</text>
        <dbReference type="Rhea" id="RHEA:54292"/>
        <dbReference type="Rhea" id="RHEA-COMP:11060"/>
        <dbReference type="Rhea" id="RHEA-COMP:13847"/>
        <dbReference type="ChEBI" id="CHEBI:30013"/>
        <dbReference type="ChEBI" id="CHEBI:30616"/>
        <dbReference type="ChEBI" id="CHEBI:33019"/>
        <dbReference type="ChEBI" id="CHEBI:138113"/>
        <dbReference type="EC" id="2.7.7.108"/>
    </reaction>
</comment>
<comment type="catalytic activity">
    <reaction evidence="1">
        <text>L-tyrosyl-[protein] + ATP = O-(5'-adenylyl)-L-tyrosyl-[protein] + diphosphate</text>
        <dbReference type="Rhea" id="RHEA:54288"/>
        <dbReference type="Rhea" id="RHEA-COMP:10136"/>
        <dbReference type="Rhea" id="RHEA-COMP:13846"/>
        <dbReference type="ChEBI" id="CHEBI:30616"/>
        <dbReference type="ChEBI" id="CHEBI:33019"/>
        <dbReference type="ChEBI" id="CHEBI:46858"/>
        <dbReference type="ChEBI" id="CHEBI:83624"/>
        <dbReference type="EC" id="2.7.7.108"/>
    </reaction>
</comment>
<comment type="catalytic activity">
    <reaction evidence="1">
        <text>L-histidyl-[protein] + UTP = N(tele)-(5'-uridylyl)-L-histidyl-[protein] + diphosphate</text>
        <dbReference type="Rhea" id="RHEA:83891"/>
        <dbReference type="Rhea" id="RHEA-COMP:9745"/>
        <dbReference type="Rhea" id="RHEA-COMP:20239"/>
        <dbReference type="ChEBI" id="CHEBI:29979"/>
        <dbReference type="ChEBI" id="CHEBI:33019"/>
        <dbReference type="ChEBI" id="CHEBI:46398"/>
        <dbReference type="ChEBI" id="CHEBI:233474"/>
    </reaction>
</comment>
<comment type="catalytic activity">
    <reaction evidence="1">
        <text>L-seryl-[protein] + UTP = O-(5'-uridylyl)-L-seryl-[protein] + diphosphate</text>
        <dbReference type="Rhea" id="RHEA:64604"/>
        <dbReference type="Rhea" id="RHEA-COMP:9863"/>
        <dbReference type="Rhea" id="RHEA-COMP:16635"/>
        <dbReference type="ChEBI" id="CHEBI:29999"/>
        <dbReference type="ChEBI" id="CHEBI:33019"/>
        <dbReference type="ChEBI" id="CHEBI:46398"/>
        <dbReference type="ChEBI" id="CHEBI:156051"/>
    </reaction>
</comment>
<comment type="catalytic activity">
    <reaction evidence="1">
        <text>L-tyrosyl-[protein] + UTP = O-(5'-uridylyl)-L-tyrosyl-[protein] + diphosphate</text>
        <dbReference type="Rhea" id="RHEA:83887"/>
        <dbReference type="Rhea" id="RHEA-COMP:10136"/>
        <dbReference type="Rhea" id="RHEA-COMP:20238"/>
        <dbReference type="ChEBI" id="CHEBI:33019"/>
        <dbReference type="ChEBI" id="CHEBI:46398"/>
        <dbReference type="ChEBI" id="CHEBI:46858"/>
        <dbReference type="ChEBI" id="CHEBI:90602"/>
    </reaction>
</comment>
<comment type="cofactor">
    <cofactor evidence="1">
        <name>Mg(2+)</name>
        <dbReference type="ChEBI" id="CHEBI:18420"/>
    </cofactor>
    <cofactor evidence="1">
        <name>Mn(2+)</name>
        <dbReference type="ChEBI" id="CHEBI:29035"/>
    </cofactor>
</comment>
<comment type="similarity">
    <text evidence="1">Belongs to the SELO family.</text>
</comment>
<reference key="1">
    <citation type="submission" date="2008-02" db="EMBL/GenBank/DDBJ databases">
        <title>Complete sequence of chromosome 1 of Burkholderia cenocepacia MC0-3.</title>
        <authorList>
            <person name="Copeland A."/>
            <person name="Lucas S."/>
            <person name="Lapidus A."/>
            <person name="Barry K."/>
            <person name="Bruce D."/>
            <person name="Goodwin L."/>
            <person name="Glavina del Rio T."/>
            <person name="Dalin E."/>
            <person name="Tice H."/>
            <person name="Pitluck S."/>
            <person name="Chain P."/>
            <person name="Malfatti S."/>
            <person name="Shin M."/>
            <person name="Vergez L."/>
            <person name="Schmutz J."/>
            <person name="Larimer F."/>
            <person name="Land M."/>
            <person name="Hauser L."/>
            <person name="Kyrpides N."/>
            <person name="Mikhailova N."/>
            <person name="Tiedje J."/>
            <person name="Richardson P."/>
        </authorList>
    </citation>
    <scope>NUCLEOTIDE SEQUENCE [LARGE SCALE GENOMIC DNA]</scope>
    <source>
        <strain>MC0-3</strain>
    </source>
</reference>
<feature type="chain" id="PRO_1000132093" description="Protein nucleotidyltransferase YdiU">
    <location>
        <begin position="1"/>
        <end position="522"/>
    </location>
</feature>
<feature type="active site" description="Proton acceptor" evidence="1">
    <location>
        <position position="271"/>
    </location>
</feature>
<feature type="binding site" evidence="1">
    <location>
        <position position="109"/>
    </location>
    <ligand>
        <name>ATP</name>
        <dbReference type="ChEBI" id="CHEBI:30616"/>
    </ligand>
</feature>
<feature type="binding site" evidence="1">
    <location>
        <position position="111"/>
    </location>
    <ligand>
        <name>ATP</name>
        <dbReference type="ChEBI" id="CHEBI:30616"/>
    </ligand>
</feature>
<feature type="binding site" evidence="1">
    <location>
        <position position="112"/>
    </location>
    <ligand>
        <name>ATP</name>
        <dbReference type="ChEBI" id="CHEBI:30616"/>
    </ligand>
</feature>
<feature type="binding site" evidence="1">
    <location>
        <position position="132"/>
    </location>
    <ligand>
        <name>ATP</name>
        <dbReference type="ChEBI" id="CHEBI:30616"/>
    </ligand>
</feature>
<feature type="binding site" evidence="1">
    <location>
        <position position="144"/>
    </location>
    <ligand>
        <name>ATP</name>
        <dbReference type="ChEBI" id="CHEBI:30616"/>
    </ligand>
</feature>
<feature type="binding site" evidence="1">
    <location>
        <position position="145"/>
    </location>
    <ligand>
        <name>ATP</name>
        <dbReference type="ChEBI" id="CHEBI:30616"/>
    </ligand>
</feature>
<feature type="binding site" evidence="1">
    <location>
        <position position="195"/>
    </location>
    <ligand>
        <name>ATP</name>
        <dbReference type="ChEBI" id="CHEBI:30616"/>
    </ligand>
</feature>
<feature type="binding site" evidence="1">
    <location>
        <position position="202"/>
    </location>
    <ligand>
        <name>ATP</name>
        <dbReference type="ChEBI" id="CHEBI:30616"/>
    </ligand>
</feature>
<feature type="binding site" evidence="1">
    <location>
        <position position="272"/>
    </location>
    <ligand>
        <name>Mg(2+)</name>
        <dbReference type="ChEBI" id="CHEBI:18420"/>
    </ligand>
</feature>
<feature type="binding site" evidence="1">
    <location>
        <position position="281"/>
    </location>
    <ligand>
        <name>ATP</name>
        <dbReference type="ChEBI" id="CHEBI:30616"/>
    </ligand>
</feature>
<feature type="binding site" evidence="1">
    <location>
        <position position="281"/>
    </location>
    <ligand>
        <name>Mg(2+)</name>
        <dbReference type="ChEBI" id="CHEBI:18420"/>
    </ligand>
</feature>
<organism>
    <name type="scientific">Burkholderia orbicola (strain MC0-3)</name>
    <dbReference type="NCBI Taxonomy" id="406425"/>
    <lineage>
        <taxon>Bacteria</taxon>
        <taxon>Pseudomonadati</taxon>
        <taxon>Pseudomonadota</taxon>
        <taxon>Betaproteobacteria</taxon>
        <taxon>Burkholderiales</taxon>
        <taxon>Burkholderiaceae</taxon>
        <taxon>Burkholderia</taxon>
        <taxon>Burkholderia cepacia complex</taxon>
        <taxon>Burkholderia orbicola</taxon>
    </lineage>
</organism>